<feature type="chain" id="PRO_1000092927" description="Peptidyl-tRNA hydrolase">
    <location>
        <begin position="1"/>
        <end position="191"/>
    </location>
</feature>
<feature type="active site" description="Proton acceptor" evidence="1">
    <location>
        <position position="19"/>
    </location>
</feature>
<feature type="binding site" evidence="1">
    <location>
        <position position="14"/>
    </location>
    <ligand>
        <name>tRNA</name>
        <dbReference type="ChEBI" id="CHEBI:17843"/>
    </ligand>
</feature>
<feature type="binding site" evidence="1">
    <location>
        <position position="64"/>
    </location>
    <ligand>
        <name>tRNA</name>
        <dbReference type="ChEBI" id="CHEBI:17843"/>
    </ligand>
</feature>
<feature type="binding site" evidence="1">
    <location>
        <position position="66"/>
    </location>
    <ligand>
        <name>tRNA</name>
        <dbReference type="ChEBI" id="CHEBI:17843"/>
    </ligand>
</feature>
<feature type="binding site" evidence="1">
    <location>
        <position position="112"/>
    </location>
    <ligand>
        <name>tRNA</name>
        <dbReference type="ChEBI" id="CHEBI:17843"/>
    </ligand>
</feature>
<feature type="site" description="Discriminates between blocked and unblocked aminoacyl-tRNA" evidence="1">
    <location>
        <position position="9"/>
    </location>
</feature>
<feature type="site" description="Stabilizes the basic form of H active site to accept a proton" evidence="1">
    <location>
        <position position="91"/>
    </location>
</feature>
<reference key="1">
    <citation type="submission" date="2008-05" db="EMBL/GenBank/DDBJ databases">
        <title>Complete genome sequence of Clostridium botulinum E3 str. Alaska E43.</title>
        <authorList>
            <person name="Brinkac L.M."/>
            <person name="Brown J.L."/>
            <person name="Bruce D."/>
            <person name="Detter C."/>
            <person name="Munk C."/>
            <person name="Smith L.A."/>
            <person name="Smith T.J."/>
            <person name="Sutton G."/>
            <person name="Brettin T.S."/>
        </authorList>
    </citation>
    <scope>NUCLEOTIDE SEQUENCE [LARGE SCALE GENOMIC DNA]</scope>
    <source>
        <strain>Alaska E43 / Type E3</strain>
    </source>
</reference>
<proteinExistence type="inferred from homology"/>
<gene>
    <name evidence="1" type="primary">pth</name>
    <name type="ordered locus">CLH_0143</name>
</gene>
<dbReference type="EC" id="3.1.1.29" evidence="1"/>
<dbReference type="EMBL" id="CP001078">
    <property type="protein sequence ID" value="ACD51952.1"/>
    <property type="molecule type" value="Genomic_DNA"/>
</dbReference>
<dbReference type="RefSeq" id="WP_012450199.1">
    <property type="nucleotide sequence ID" value="NC_010723.1"/>
</dbReference>
<dbReference type="SMR" id="B2UXS9"/>
<dbReference type="KEGG" id="cbt:CLH_0143"/>
<dbReference type="HOGENOM" id="CLU_062456_4_1_9"/>
<dbReference type="GO" id="GO:0005737">
    <property type="term" value="C:cytoplasm"/>
    <property type="evidence" value="ECO:0007669"/>
    <property type="project" value="UniProtKB-SubCell"/>
</dbReference>
<dbReference type="GO" id="GO:0004045">
    <property type="term" value="F:peptidyl-tRNA hydrolase activity"/>
    <property type="evidence" value="ECO:0007669"/>
    <property type="project" value="UniProtKB-UniRule"/>
</dbReference>
<dbReference type="GO" id="GO:0000049">
    <property type="term" value="F:tRNA binding"/>
    <property type="evidence" value="ECO:0007669"/>
    <property type="project" value="UniProtKB-UniRule"/>
</dbReference>
<dbReference type="GO" id="GO:0006515">
    <property type="term" value="P:protein quality control for misfolded or incompletely synthesized proteins"/>
    <property type="evidence" value="ECO:0007669"/>
    <property type="project" value="UniProtKB-UniRule"/>
</dbReference>
<dbReference type="GO" id="GO:0072344">
    <property type="term" value="P:rescue of stalled ribosome"/>
    <property type="evidence" value="ECO:0007669"/>
    <property type="project" value="UniProtKB-UniRule"/>
</dbReference>
<dbReference type="CDD" id="cd00462">
    <property type="entry name" value="PTH"/>
    <property type="match status" value="1"/>
</dbReference>
<dbReference type="FunFam" id="3.40.50.1470:FF:000001">
    <property type="entry name" value="Peptidyl-tRNA hydrolase"/>
    <property type="match status" value="1"/>
</dbReference>
<dbReference type="Gene3D" id="3.40.50.1470">
    <property type="entry name" value="Peptidyl-tRNA hydrolase"/>
    <property type="match status" value="1"/>
</dbReference>
<dbReference type="HAMAP" id="MF_00083">
    <property type="entry name" value="Pept_tRNA_hydro_bact"/>
    <property type="match status" value="1"/>
</dbReference>
<dbReference type="InterPro" id="IPR001328">
    <property type="entry name" value="Pept_tRNA_hydro"/>
</dbReference>
<dbReference type="InterPro" id="IPR018171">
    <property type="entry name" value="Pept_tRNA_hydro_CS"/>
</dbReference>
<dbReference type="InterPro" id="IPR036416">
    <property type="entry name" value="Pept_tRNA_hydro_sf"/>
</dbReference>
<dbReference type="NCBIfam" id="TIGR00447">
    <property type="entry name" value="pth"/>
    <property type="match status" value="1"/>
</dbReference>
<dbReference type="PANTHER" id="PTHR17224">
    <property type="entry name" value="PEPTIDYL-TRNA HYDROLASE"/>
    <property type="match status" value="1"/>
</dbReference>
<dbReference type="PANTHER" id="PTHR17224:SF1">
    <property type="entry name" value="PEPTIDYL-TRNA HYDROLASE"/>
    <property type="match status" value="1"/>
</dbReference>
<dbReference type="Pfam" id="PF01195">
    <property type="entry name" value="Pept_tRNA_hydro"/>
    <property type="match status" value="1"/>
</dbReference>
<dbReference type="SUPFAM" id="SSF53178">
    <property type="entry name" value="Peptidyl-tRNA hydrolase-like"/>
    <property type="match status" value="1"/>
</dbReference>
<dbReference type="PROSITE" id="PS01195">
    <property type="entry name" value="PEPT_TRNA_HYDROL_1"/>
    <property type="match status" value="1"/>
</dbReference>
<dbReference type="PROSITE" id="PS01196">
    <property type="entry name" value="PEPT_TRNA_HYDROL_2"/>
    <property type="match status" value="1"/>
</dbReference>
<accession>B2UXS9</accession>
<protein>
    <recommendedName>
        <fullName evidence="1">Peptidyl-tRNA hydrolase</fullName>
        <shortName evidence="1">Pth</shortName>
        <ecNumber evidence="1">3.1.1.29</ecNumber>
    </recommendedName>
</protein>
<comment type="function">
    <text evidence="1">Hydrolyzes ribosome-free peptidyl-tRNAs (with 1 or more amino acids incorporated), which drop off the ribosome during protein synthesis, or as a result of ribosome stalling.</text>
</comment>
<comment type="function">
    <text evidence="1">Catalyzes the release of premature peptidyl moieties from peptidyl-tRNA molecules trapped in stalled 50S ribosomal subunits, and thus maintains levels of free tRNAs and 50S ribosomes.</text>
</comment>
<comment type="catalytic activity">
    <reaction evidence="1">
        <text>an N-acyl-L-alpha-aminoacyl-tRNA + H2O = an N-acyl-L-amino acid + a tRNA + H(+)</text>
        <dbReference type="Rhea" id="RHEA:54448"/>
        <dbReference type="Rhea" id="RHEA-COMP:10123"/>
        <dbReference type="Rhea" id="RHEA-COMP:13883"/>
        <dbReference type="ChEBI" id="CHEBI:15377"/>
        <dbReference type="ChEBI" id="CHEBI:15378"/>
        <dbReference type="ChEBI" id="CHEBI:59874"/>
        <dbReference type="ChEBI" id="CHEBI:78442"/>
        <dbReference type="ChEBI" id="CHEBI:138191"/>
        <dbReference type="EC" id="3.1.1.29"/>
    </reaction>
</comment>
<comment type="subunit">
    <text evidence="1">Monomer.</text>
</comment>
<comment type="subcellular location">
    <subcellularLocation>
        <location evidence="1">Cytoplasm</location>
    </subcellularLocation>
</comment>
<comment type="similarity">
    <text evidence="1">Belongs to the PTH family.</text>
</comment>
<evidence type="ECO:0000255" key="1">
    <source>
        <dbReference type="HAMAP-Rule" id="MF_00083"/>
    </source>
</evidence>
<name>PTH_CLOBA</name>
<keyword id="KW-0963">Cytoplasm</keyword>
<keyword id="KW-0378">Hydrolase</keyword>
<keyword id="KW-0694">RNA-binding</keyword>
<keyword id="KW-0820">tRNA-binding</keyword>
<sequence length="191" mass="21264">MFLIVGLGNPGSKYDNTRHNIGFEVIDNISNEYNIDINRQKFKGVYGEGFIANNKVILLKPTTYMNLSGDSVREVANFYKISNENIIVIYDDISLDIGRLRIREKGSAGGHNGIKSIIANLSTDVFPRIKVGVGQPNDNLVDYVLGKFSKEEKEVLKESIEAATNSVEEIIKQDINSAMNKFNGFKANKSI</sequence>
<organism>
    <name type="scientific">Clostridium botulinum (strain Alaska E43 / Type E3)</name>
    <dbReference type="NCBI Taxonomy" id="508767"/>
    <lineage>
        <taxon>Bacteria</taxon>
        <taxon>Bacillati</taxon>
        <taxon>Bacillota</taxon>
        <taxon>Clostridia</taxon>
        <taxon>Eubacteriales</taxon>
        <taxon>Clostridiaceae</taxon>
        <taxon>Clostridium</taxon>
    </lineage>
</organism>